<name>HUTG_SALG2</name>
<sequence>MTQWYPASPALWQGRDDSIEAPDARRLFQTVTRSETFSPENWQQKIALMGFACDEGVKRNAGRPGAAGAPDALRKALANMASHQGHERLVDLGNWVAPTPDLEGAQQALRDAVSRCLRAGMRTLVLGGGHETAFGHGAGVLDAFAQESVGIINLDAHLDLRQTDRATSGTPFRQLAQLCDAQSRAFHYACFGVSRAANTQALWREAQWRNVTVVEDLDCHDALAQMTQFIDKVDKIYLTIDLDVLPVWEMPAVSAPAALGVPLIQVLRLIEPVCRSGKLQAADLVEFNPRFDEDGAAARVAARLGWQIAHWWR</sequence>
<keyword id="KW-0369">Histidine metabolism</keyword>
<keyword id="KW-0378">Hydrolase</keyword>
<keyword id="KW-0464">Manganese</keyword>
<keyword id="KW-0479">Metal-binding</keyword>
<protein>
    <recommendedName>
        <fullName evidence="1">Formimidoylglutamase</fullName>
        <ecNumber evidence="1">3.5.3.8</ecNumber>
    </recommendedName>
    <alternativeName>
        <fullName evidence="1">Formiminoglutamase</fullName>
    </alternativeName>
    <alternativeName>
        <fullName evidence="1">Formiminoglutamate hydrolase</fullName>
    </alternativeName>
</protein>
<organism>
    <name type="scientific">Salmonella gallinarum (strain 287/91 / NCTC 13346)</name>
    <dbReference type="NCBI Taxonomy" id="550538"/>
    <lineage>
        <taxon>Bacteria</taxon>
        <taxon>Pseudomonadati</taxon>
        <taxon>Pseudomonadota</taxon>
        <taxon>Gammaproteobacteria</taxon>
        <taxon>Enterobacterales</taxon>
        <taxon>Enterobacteriaceae</taxon>
        <taxon>Salmonella</taxon>
    </lineage>
</organism>
<proteinExistence type="inferred from homology"/>
<feature type="chain" id="PRO_1000133008" description="Formimidoylglutamase">
    <location>
        <begin position="1"/>
        <end position="313"/>
    </location>
</feature>
<feature type="binding site" evidence="1">
    <location>
        <position position="130"/>
    </location>
    <ligand>
        <name>Mn(2+)</name>
        <dbReference type="ChEBI" id="CHEBI:29035"/>
        <label>1</label>
    </ligand>
</feature>
<feature type="binding site" evidence="1">
    <location>
        <position position="155"/>
    </location>
    <ligand>
        <name>Mn(2+)</name>
        <dbReference type="ChEBI" id="CHEBI:29035"/>
        <label>1</label>
    </ligand>
</feature>
<feature type="binding site" evidence="1">
    <location>
        <position position="155"/>
    </location>
    <ligand>
        <name>Mn(2+)</name>
        <dbReference type="ChEBI" id="CHEBI:29035"/>
        <label>2</label>
    </ligand>
</feature>
<feature type="binding site" evidence="1">
    <location>
        <position position="157"/>
    </location>
    <ligand>
        <name>Mn(2+)</name>
        <dbReference type="ChEBI" id="CHEBI:29035"/>
        <label>2</label>
    </ligand>
</feature>
<feature type="binding site" evidence="1">
    <location>
        <position position="159"/>
    </location>
    <ligand>
        <name>Mn(2+)</name>
        <dbReference type="ChEBI" id="CHEBI:29035"/>
        <label>1</label>
    </ligand>
</feature>
<feature type="binding site" evidence="1">
    <location>
        <position position="241"/>
    </location>
    <ligand>
        <name>Mn(2+)</name>
        <dbReference type="ChEBI" id="CHEBI:29035"/>
        <label>1</label>
    </ligand>
</feature>
<feature type="binding site" evidence="1">
    <location>
        <position position="241"/>
    </location>
    <ligand>
        <name>Mn(2+)</name>
        <dbReference type="ChEBI" id="CHEBI:29035"/>
        <label>2</label>
    </ligand>
</feature>
<feature type="binding site" evidence="1">
    <location>
        <position position="243"/>
    </location>
    <ligand>
        <name>Mn(2+)</name>
        <dbReference type="ChEBI" id="CHEBI:29035"/>
        <label>2</label>
    </ligand>
</feature>
<comment type="function">
    <text evidence="1">Catalyzes the conversion of N-formimidoyl-L-glutamate to L-glutamate and formamide.</text>
</comment>
<comment type="catalytic activity">
    <reaction evidence="1">
        <text>N-formimidoyl-L-glutamate + H2O = formamide + L-glutamate</text>
        <dbReference type="Rhea" id="RHEA:22492"/>
        <dbReference type="ChEBI" id="CHEBI:15377"/>
        <dbReference type="ChEBI" id="CHEBI:16397"/>
        <dbReference type="ChEBI" id="CHEBI:29985"/>
        <dbReference type="ChEBI" id="CHEBI:58928"/>
        <dbReference type="EC" id="3.5.3.8"/>
    </reaction>
</comment>
<comment type="cofactor">
    <cofactor evidence="1">
        <name>Mn(2+)</name>
        <dbReference type="ChEBI" id="CHEBI:29035"/>
    </cofactor>
    <text evidence="1">Binds 2 manganese ions per subunit.</text>
</comment>
<comment type="pathway">
    <text evidence="1">Amino-acid degradation; L-histidine degradation into L-glutamate; L-glutamate from N-formimidoyl-L-glutamate (hydrolase route): step 1/1.</text>
</comment>
<comment type="similarity">
    <text evidence="1">Belongs to the arginase family.</text>
</comment>
<accession>B5R755</accession>
<reference key="1">
    <citation type="journal article" date="2008" name="Genome Res.">
        <title>Comparative genome analysis of Salmonella enteritidis PT4 and Salmonella gallinarum 287/91 provides insights into evolutionary and host adaptation pathways.</title>
        <authorList>
            <person name="Thomson N.R."/>
            <person name="Clayton D.J."/>
            <person name="Windhorst D."/>
            <person name="Vernikos G."/>
            <person name="Davidson S."/>
            <person name="Churcher C."/>
            <person name="Quail M.A."/>
            <person name="Stevens M."/>
            <person name="Jones M.A."/>
            <person name="Watson M."/>
            <person name="Barron A."/>
            <person name="Layton A."/>
            <person name="Pickard D."/>
            <person name="Kingsley R.A."/>
            <person name="Bignell A."/>
            <person name="Clark L."/>
            <person name="Harris B."/>
            <person name="Ormond D."/>
            <person name="Abdellah Z."/>
            <person name="Brooks K."/>
            <person name="Cherevach I."/>
            <person name="Chillingworth T."/>
            <person name="Woodward J."/>
            <person name="Norberczak H."/>
            <person name="Lord A."/>
            <person name="Arrowsmith C."/>
            <person name="Jagels K."/>
            <person name="Moule S."/>
            <person name="Mungall K."/>
            <person name="Saunders M."/>
            <person name="Whitehead S."/>
            <person name="Chabalgoity J.A."/>
            <person name="Maskell D."/>
            <person name="Humphreys T."/>
            <person name="Roberts M."/>
            <person name="Barrow P.A."/>
            <person name="Dougan G."/>
            <person name="Parkhill J."/>
        </authorList>
    </citation>
    <scope>NUCLEOTIDE SEQUENCE [LARGE SCALE GENOMIC DNA]</scope>
    <source>
        <strain>287/91 / NCTC 13346</strain>
    </source>
</reference>
<dbReference type="EC" id="3.5.3.8" evidence="1"/>
<dbReference type="EMBL" id="AM933173">
    <property type="protein sequence ID" value="CAR36662.1"/>
    <property type="molecule type" value="Genomic_DNA"/>
</dbReference>
<dbReference type="RefSeq" id="WP_000195683.1">
    <property type="nucleotide sequence ID" value="NC_011274.1"/>
</dbReference>
<dbReference type="SMR" id="B5R755"/>
<dbReference type="KEGG" id="seg:SG0766"/>
<dbReference type="HOGENOM" id="CLU_039478_2_0_6"/>
<dbReference type="UniPathway" id="UPA00379">
    <property type="reaction ID" value="UER00552"/>
</dbReference>
<dbReference type="Proteomes" id="UP000008321">
    <property type="component" value="Chromosome"/>
</dbReference>
<dbReference type="GO" id="GO:0008783">
    <property type="term" value="F:agmatinase activity"/>
    <property type="evidence" value="ECO:0007669"/>
    <property type="project" value="TreeGrafter"/>
</dbReference>
<dbReference type="GO" id="GO:0050415">
    <property type="term" value="F:formimidoylglutamase activity"/>
    <property type="evidence" value="ECO:0007669"/>
    <property type="project" value="UniProtKB-UniRule"/>
</dbReference>
<dbReference type="GO" id="GO:0030145">
    <property type="term" value="F:manganese ion binding"/>
    <property type="evidence" value="ECO:0007669"/>
    <property type="project" value="UniProtKB-UniRule"/>
</dbReference>
<dbReference type="GO" id="GO:0019556">
    <property type="term" value="P:L-histidine catabolic process to glutamate and formamide"/>
    <property type="evidence" value="ECO:0007669"/>
    <property type="project" value="UniProtKB-UniPathway"/>
</dbReference>
<dbReference type="GO" id="GO:0019557">
    <property type="term" value="P:L-histidine catabolic process to glutamate and formate"/>
    <property type="evidence" value="ECO:0007669"/>
    <property type="project" value="UniProtKB-UniPathway"/>
</dbReference>
<dbReference type="GO" id="GO:0033389">
    <property type="term" value="P:putrescine biosynthetic process from arginine, via agmatine"/>
    <property type="evidence" value="ECO:0007669"/>
    <property type="project" value="TreeGrafter"/>
</dbReference>
<dbReference type="CDD" id="cd09988">
    <property type="entry name" value="Formimidoylglutamase"/>
    <property type="match status" value="1"/>
</dbReference>
<dbReference type="FunFam" id="3.40.800.10:FF:000010">
    <property type="entry name" value="Formimidoylglutamase"/>
    <property type="match status" value="1"/>
</dbReference>
<dbReference type="Gene3D" id="3.40.800.10">
    <property type="entry name" value="Ureohydrolase domain"/>
    <property type="match status" value="1"/>
</dbReference>
<dbReference type="HAMAP" id="MF_00737">
    <property type="entry name" value="Formimidoylglutam"/>
    <property type="match status" value="1"/>
</dbReference>
<dbReference type="InterPro" id="IPR005923">
    <property type="entry name" value="HutG"/>
</dbReference>
<dbReference type="InterPro" id="IPR006035">
    <property type="entry name" value="Ureohydrolase"/>
</dbReference>
<dbReference type="InterPro" id="IPR023696">
    <property type="entry name" value="Ureohydrolase_dom_sf"/>
</dbReference>
<dbReference type="NCBIfam" id="TIGR01227">
    <property type="entry name" value="hutG"/>
    <property type="match status" value="1"/>
</dbReference>
<dbReference type="PANTHER" id="PTHR11358">
    <property type="entry name" value="ARGINASE/AGMATINASE"/>
    <property type="match status" value="1"/>
</dbReference>
<dbReference type="PANTHER" id="PTHR11358:SF35">
    <property type="entry name" value="FORMIMIDOYLGLUTAMASE"/>
    <property type="match status" value="1"/>
</dbReference>
<dbReference type="Pfam" id="PF00491">
    <property type="entry name" value="Arginase"/>
    <property type="match status" value="1"/>
</dbReference>
<dbReference type="PIRSF" id="PIRSF036979">
    <property type="entry name" value="Arginase"/>
    <property type="match status" value="1"/>
</dbReference>
<dbReference type="SUPFAM" id="SSF52768">
    <property type="entry name" value="Arginase/deacetylase"/>
    <property type="match status" value="1"/>
</dbReference>
<dbReference type="PROSITE" id="PS51409">
    <property type="entry name" value="ARGINASE_2"/>
    <property type="match status" value="1"/>
</dbReference>
<evidence type="ECO:0000255" key="1">
    <source>
        <dbReference type="HAMAP-Rule" id="MF_00737"/>
    </source>
</evidence>
<gene>
    <name evidence="1" type="primary">hutG</name>
    <name type="ordered locus">SG0766</name>
</gene>